<dbReference type="EMBL" id="AE005674">
    <property type="protein sequence ID" value="AAN44236.1"/>
    <property type="molecule type" value="Genomic_DNA"/>
</dbReference>
<dbReference type="EMBL" id="AE014073">
    <property type="protein sequence ID" value="AAP18063.1"/>
    <property type="molecule type" value="Genomic_DNA"/>
</dbReference>
<dbReference type="RefSeq" id="NP_708529.1">
    <property type="nucleotide sequence ID" value="NC_004337.2"/>
</dbReference>
<dbReference type="RefSeq" id="WP_000334881.1">
    <property type="nucleotide sequence ID" value="NZ_WPGW01000014.1"/>
</dbReference>
<dbReference type="BMRB" id="P0AAM6"/>
<dbReference type="SMR" id="P0AAM6"/>
<dbReference type="STRING" id="198214.SF2745"/>
<dbReference type="PaxDb" id="198214-SF2745"/>
<dbReference type="GeneID" id="1023542"/>
<dbReference type="GeneID" id="93779280"/>
<dbReference type="KEGG" id="sfl:SF2745"/>
<dbReference type="KEGG" id="sfx:S2937"/>
<dbReference type="PATRIC" id="fig|198214.7.peg.3268"/>
<dbReference type="HOGENOM" id="CLU_159381_1_1_6"/>
<dbReference type="UniPathway" id="UPA00335"/>
<dbReference type="Proteomes" id="UP000001006">
    <property type="component" value="Chromosome"/>
</dbReference>
<dbReference type="Proteomes" id="UP000002673">
    <property type="component" value="Chromosome"/>
</dbReference>
<dbReference type="GO" id="GO:1902670">
    <property type="term" value="F:carbon dioxide binding"/>
    <property type="evidence" value="ECO:0007669"/>
    <property type="project" value="TreeGrafter"/>
</dbReference>
<dbReference type="GO" id="GO:0005506">
    <property type="term" value="F:iron ion binding"/>
    <property type="evidence" value="ECO:0007669"/>
    <property type="project" value="TreeGrafter"/>
</dbReference>
<dbReference type="GO" id="GO:0051604">
    <property type="term" value="P:protein maturation"/>
    <property type="evidence" value="ECO:0007669"/>
    <property type="project" value="TreeGrafter"/>
</dbReference>
<dbReference type="FunFam" id="2.30.30.140:FF:000023">
    <property type="entry name" value="Hydrogenase assembly chaperone protein HypC"/>
    <property type="match status" value="1"/>
</dbReference>
<dbReference type="Gene3D" id="2.30.30.140">
    <property type="match status" value="1"/>
</dbReference>
<dbReference type="Gene3D" id="6.10.250.910">
    <property type="match status" value="1"/>
</dbReference>
<dbReference type="InterPro" id="IPR019812">
    <property type="entry name" value="Hydgase_assmbl_chp_CS"/>
</dbReference>
<dbReference type="InterPro" id="IPR001109">
    <property type="entry name" value="Hydrogenase_HupF/HypC"/>
</dbReference>
<dbReference type="NCBIfam" id="TIGR00074">
    <property type="entry name" value="hypC_hupF"/>
    <property type="match status" value="1"/>
</dbReference>
<dbReference type="NCBIfam" id="NF007712">
    <property type="entry name" value="PRK10409.1"/>
    <property type="match status" value="1"/>
</dbReference>
<dbReference type="PANTHER" id="PTHR35177">
    <property type="entry name" value="HYDROGENASE MATURATION FACTOR HYBG"/>
    <property type="match status" value="1"/>
</dbReference>
<dbReference type="PANTHER" id="PTHR35177:SF1">
    <property type="entry name" value="HYDROGENASE MATURATION FACTOR HYPC"/>
    <property type="match status" value="1"/>
</dbReference>
<dbReference type="Pfam" id="PF01455">
    <property type="entry name" value="HupF_HypC"/>
    <property type="match status" value="1"/>
</dbReference>
<dbReference type="PRINTS" id="PR00445">
    <property type="entry name" value="HUPFHYPC"/>
</dbReference>
<dbReference type="SUPFAM" id="SSF159127">
    <property type="entry name" value="HupF/HypC-like"/>
    <property type="match status" value="1"/>
</dbReference>
<dbReference type="PROSITE" id="PS01097">
    <property type="entry name" value="HUPF_HYPC"/>
    <property type="match status" value="1"/>
</dbReference>
<gene>
    <name type="primary">hypC</name>
    <name type="ordered locus">SF2745</name>
    <name type="ordered locus">S2937</name>
</gene>
<feature type="chain" id="PRO_0000201401" description="Hydrogenase maturation factor HypC">
    <location>
        <begin position="1"/>
        <end position="90"/>
    </location>
</feature>
<feature type="site" description="Important for interaction with HypD and the precursor form of hydrogenase" evidence="1">
    <location>
        <position position="2"/>
    </location>
</feature>
<comment type="function">
    <text evidence="1">Involved in the maturation of [NiFe] hydrogenases. Involved in the biosynthesis of the Fe(CN)(2)CO cofactor. HypC delivers iron-bound CO(2) to HypD where reduction to CO probably occurs. In complex with HypD, accepts the cyanide ligand generated by HypF and HypE, and also coordinates the carbon monoxide ligand.</text>
</comment>
<comment type="pathway">
    <text evidence="1">Protein modification; [NiFe] hydrogenase maturation.</text>
</comment>
<comment type="similarity">
    <text evidence="2">Belongs to the HupF/HypC family.</text>
</comment>
<sequence length="90" mass="9732">MCIGVPGQIRTIDGNQAKVDVCGIQRDVDLTLVGSCDENGQPRVGQWVLVHVGFAMSVINEAEARDTLDALQNMFDVEPDVGALLYGEEK</sequence>
<keyword id="KW-1185">Reference proteome</keyword>
<accession>P0AAM6</accession>
<accession>P24191</accession>
<organism>
    <name type="scientific">Shigella flexneri</name>
    <dbReference type="NCBI Taxonomy" id="623"/>
    <lineage>
        <taxon>Bacteria</taxon>
        <taxon>Pseudomonadati</taxon>
        <taxon>Pseudomonadota</taxon>
        <taxon>Gammaproteobacteria</taxon>
        <taxon>Enterobacterales</taxon>
        <taxon>Enterobacteriaceae</taxon>
        <taxon>Shigella</taxon>
    </lineage>
</organism>
<reference key="1">
    <citation type="journal article" date="2002" name="Nucleic Acids Res.">
        <title>Genome sequence of Shigella flexneri 2a: insights into pathogenicity through comparison with genomes of Escherichia coli K12 and O157.</title>
        <authorList>
            <person name="Jin Q."/>
            <person name="Yuan Z."/>
            <person name="Xu J."/>
            <person name="Wang Y."/>
            <person name="Shen Y."/>
            <person name="Lu W."/>
            <person name="Wang J."/>
            <person name="Liu H."/>
            <person name="Yang J."/>
            <person name="Yang F."/>
            <person name="Zhang X."/>
            <person name="Zhang J."/>
            <person name="Yang G."/>
            <person name="Wu H."/>
            <person name="Qu D."/>
            <person name="Dong J."/>
            <person name="Sun L."/>
            <person name="Xue Y."/>
            <person name="Zhao A."/>
            <person name="Gao Y."/>
            <person name="Zhu J."/>
            <person name="Kan B."/>
            <person name="Ding K."/>
            <person name="Chen S."/>
            <person name="Cheng H."/>
            <person name="Yao Z."/>
            <person name="He B."/>
            <person name="Chen R."/>
            <person name="Ma D."/>
            <person name="Qiang B."/>
            <person name="Wen Y."/>
            <person name="Hou Y."/>
            <person name="Yu J."/>
        </authorList>
    </citation>
    <scope>NUCLEOTIDE SEQUENCE [LARGE SCALE GENOMIC DNA]</scope>
    <source>
        <strain>301 / Serotype 2a</strain>
    </source>
</reference>
<reference key="2">
    <citation type="journal article" date="2003" name="Infect. Immun.">
        <title>Complete genome sequence and comparative genomics of Shigella flexneri serotype 2a strain 2457T.</title>
        <authorList>
            <person name="Wei J."/>
            <person name="Goldberg M.B."/>
            <person name="Burland V."/>
            <person name="Venkatesan M.M."/>
            <person name="Deng W."/>
            <person name="Fournier G."/>
            <person name="Mayhew G.F."/>
            <person name="Plunkett G. III"/>
            <person name="Rose D.J."/>
            <person name="Darling A."/>
            <person name="Mau B."/>
            <person name="Perna N.T."/>
            <person name="Payne S.M."/>
            <person name="Runyen-Janecky L.J."/>
            <person name="Zhou S."/>
            <person name="Schwartz D.C."/>
            <person name="Blattner F.R."/>
        </authorList>
    </citation>
    <scope>NUCLEOTIDE SEQUENCE [LARGE SCALE GENOMIC DNA]</scope>
    <source>
        <strain>ATCC 700930 / 2457T / Serotype 2a</strain>
    </source>
</reference>
<name>HYPC_SHIFL</name>
<protein>
    <recommendedName>
        <fullName evidence="1">Hydrogenase maturation factor HypC</fullName>
    </recommendedName>
</protein>
<proteinExistence type="inferred from homology"/>
<evidence type="ECO:0000250" key="1">
    <source>
        <dbReference type="UniProtKB" id="P0AAM3"/>
    </source>
</evidence>
<evidence type="ECO:0000305" key="2"/>